<gene>
    <name evidence="1" type="primary">rplC</name>
    <name type="ordered locus">VC_2596</name>
</gene>
<name>RL3_VIBCH</name>
<sequence length="209" mass="22359">MIGLIGRKVGMTRVFTEDGVSIPVTVVEVEANRVSQVKTLETDGYAAIQVTTGSKKANRVTKPEAGHFAKAGVEAGRGLWEFRLENGEEFAVGSELTVELFNEVKKVDVTGTSKGKGFQGAVKRWNFRTQDMTHGNSLSHRAPGSIGQCQTPGRVFKGKKMAGHMGAERVTTQNLEIVRVDAERNLLLIKGAVPGATGGNVIVKPAVKA</sequence>
<accession>Q9KNY4</accession>
<dbReference type="EMBL" id="AE003852">
    <property type="protein sequence ID" value="AAF95737.1"/>
    <property type="molecule type" value="Genomic_DNA"/>
</dbReference>
<dbReference type="PIR" id="F82059">
    <property type="entry name" value="F82059"/>
</dbReference>
<dbReference type="RefSeq" id="NP_232224.1">
    <property type="nucleotide sequence ID" value="NC_002505.1"/>
</dbReference>
<dbReference type="RefSeq" id="WP_000579663.1">
    <property type="nucleotide sequence ID" value="NZ_LT906614.1"/>
</dbReference>
<dbReference type="SMR" id="Q9KNY4"/>
<dbReference type="STRING" id="243277.VC_2596"/>
<dbReference type="DNASU" id="2615613"/>
<dbReference type="EnsemblBacteria" id="AAF95737">
    <property type="protein sequence ID" value="AAF95737"/>
    <property type="gene ID" value="VC_2596"/>
</dbReference>
<dbReference type="GeneID" id="69718800"/>
<dbReference type="KEGG" id="vch:VC_2596"/>
<dbReference type="PATRIC" id="fig|243277.26.peg.2475"/>
<dbReference type="eggNOG" id="COG0087">
    <property type="taxonomic scope" value="Bacteria"/>
</dbReference>
<dbReference type="HOGENOM" id="CLU_044142_4_1_6"/>
<dbReference type="Proteomes" id="UP000000584">
    <property type="component" value="Chromosome 1"/>
</dbReference>
<dbReference type="GO" id="GO:0022625">
    <property type="term" value="C:cytosolic large ribosomal subunit"/>
    <property type="evidence" value="ECO:0000318"/>
    <property type="project" value="GO_Central"/>
</dbReference>
<dbReference type="GO" id="GO:0019843">
    <property type="term" value="F:rRNA binding"/>
    <property type="evidence" value="ECO:0007669"/>
    <property type="project" value="UniProtKB-UniRule"/>
</dbReference>
<dbReference type="GO" id="GO:0003735">
    <property type="term" value="F:structural constituent of ribosome"/>
    <property type="evidence" value="ECO:0000318"/>
    <property type="project" value="GO_Central"/>
</dbReference>
<dbReference type="GO" id="GO:0006412">
    <property type="term" value="P:translation"/>
    <property type="evidence" value="ECO:0007669"/>
    <property type="project" value="UniProtKB-UniRule"/>
</dbReference>
<dbReference type="FunFam" id="2.40.30.10:FF:000004">
    <property type="entry name" value="50S ribosomal protein L3"/>
    <property type="match status" value="1"/>
</dbReference>
<dbReference type="FunFam" id="3.30.160.810:FF:000001">
    <property type="entry name" value="50S ribosomal protein L3"/>
    <property type="match status" value="1"/>
</dbReference>
<dbReference type="Gene3D" id="3.30.160.810">
    <property type="match status" value="1"/>
</dbReference>
<dbReference type="Gene3D" id="2.40.30.10">
    <property type="entry name" value="Translation factors"/>
    <property type="match status" value="1"/>
</dbReference>
<dbReference type="HAMAP" id="MF_01325_B">
    <property type="entry name" value="Ribosomal_uL3_B"/>
    <property type="match status" value="1"/>
</dbReference>
<dbReference type="InterPro" id="IPR000597">
    <property type="entry name" value="Ribosomal_uL3"/>
</dbReference>
<dbReference type="InterPro" id="IPR019927">
    <property type="entry name" value="Ribosomal_uL3_bac/org-type"/>
</dbReference>
<dbReference type="InterPro" id="IPR019926">
    <property type="entry name" value="Ribosomal_uL3_CS"/>
</dbReference>
<dbReference type="InterPro" id="IPR009000">
    <property type="entry name" value="Transl_B-barrel_sf"/>
</dbReference>
<dbReference type="NCBIfam" id="TIGR03625">
    <property type="entry name" value="L3_bact"/>
    <property type="match status" value="1"/>
</dbReference>
<dbReference type="PANTHER" id="PTHR11229">
    <property type="entry name" value="50S RIBOSOMAL PROTEIN L3"/>
    <property type="match status" value="1"/>
</dbReference>
<dbReference type="PANTHER" id="PTHR11229:SF16">
    <property type="entry name" value="LARGE RIBOSOMAL SUBUNIT PROTEIN UL3C"/>
    <property type="match status" value="1"/>
</dbReference>
<dbReference type="Pfam" id="PF00297">
    <property type="entry name" value="Ribosomal_L3"/>
    <property type="match status" value="1"/>
</dbReference>
<dbReference type="SUPFAM" id="SSF50447">
    <property type="entry name" value="Translation proteins"/>
    <property type="match status" value="1"/>
</dbReference>
<dbReference type="PROSITE" id="PS00474">
    <property type="entry name" value="RIBOSOMAL_L3"/>
    <property type="match status" value="1"/>
</dbReference>
<reference key="1">
    <citation type="journal article" date="2000" name="Nature">
        <title>DNA sequence of both chromosomes of the cholera pathogen Vibrio cholerae.</title>
        <authorList>
            <person name="Heidelberg J.F."/>
            <person name="Eisen J.A."/>
            <person name="Nelson W.C."/>
            <person name="Clayton R.A."/>
            <person name="Gwinn M.L."/>
            <person name="Dodson R.J."/>
            <person name="Haft D.H."/>
            <person name="Hickey E.K."/>
            <person name="Peterson J.D."/>
            <person name="Umayam L.A."/>
            <person name="Gill S.R."/>
            <person name="Nelson K.E."/>
            <person name="Read T.D."/>
            <person name="Tettelin H."/>
            <person name="Richardson D.L."/>
            <person name="Ermolaeva M.D."/>
            <person name="Vamathevan J.J."/>
            <person name="Bass S."/>
            <person name="Qin H."/>
            <person name="Dragoi I."/>
            <person name="Sellers P."/>
            <person name="McDonald L.A."/>
            <person name="Utterback T.R."/>
            <person name="Fleischmann R.D."/>
            <person name="Nierman W.C."/>
            <person name="White O."/>
            <person name="Salzberg S.L."/>
            <person name="Smith H.O."/>
            <person name="Colwell R.R."/>
            <person name="Mekalanos J.J."/>
            <person name="Venter J.C."/>
            <person name="Fraser C.M."/>
        </authorList>
    </citation>
    <scope>NUCLEOTIDE SEQUENCE [LARGE SCALE GENOMIC DNA]</scope>
    <source>
        <strain>ATCC 39315 / El Tor Inaba N16961</strain>
    </source>
</reference>
<protein>
    <recommendedName>
        <fullName evidence="1">Large ribosomal subunit protein uL3</fullName>
    </recommendedName>
    <alternativeName>
        <fullName evidence="2">50S ribosomal protein L3</fullName>
    </alternativeName>
</protein>
<proteinExistence type="inferred from homology"/>
<keyword id="KW-0488">Methylation</keyword>
<keyword id="KW-1185">Reference proteome</keyword>
<keyword id="KW-0687">Ribonucleoprotein</keyword>
<keyword id="KW-0689">Ribosomal protein</keyword>
<keyword id="KW-0694">RNA-binding</keyword>
<keyword id="KW-0699">rRNA-binding</keyword>
<evidence type="ECO:0000255" key="1">
    <source>
        <dbReference type="HAMAP-Rule" id="MF_01325"/>
    </source>
</evidence>
<evidence type="ECO:0000305" key="2"/>
<organism>
    <name type="scientific">Vibrio cholerae serotype O1 (strain ATCC 39315 / El Tor Inaba N16961)</name>
    <dbReference type="NCBI Taxonomy" id="243277"/>
    <lineage>
        <taxon>Bacteria</taxon>
        <taxon>Pseudomonadati</taxon>
        <taxon>Pseudomonadota</taxon>
        <taxon>Gammaproteobacteria</taxon>
        <taxon>Vibrionales</taxon>
        <taxon>Vibrionaceae</taxon>
        <taxon>Vibrio</taxon>
    </lineage>
</organism>
<comment type="function">
    <text evidence="1">One of the primary rRNA binding proteins, it binds directly near the 3'-end of the 23S rRNA, where it nucleates assembly of the 50S subunit.</text>
</comment>
<comment type="subunit">
    <text evidence="1">Part of the 50S ribosomal subunit. Forms a cluster with proteins L14 and L19.</text>
</comment>
<comment type="PTM">
    <text evidence="1">Methylated by PrmB.</text>
</comment>
<comment type="similarity">
    <text evidence="1">Belongs to the universal ribosomal protein uL3 family.</text>
</comment>
<feature type="chain" id="PRO_0000077186" description="Large ribosomal subunit protein uL3">
    <location>
        <begin position="1"/>
        <end position="209"/>
    </location>
</feature>
<feature type="modified residue" description="N5-methylglutamine" evidence="1">
    <location>
        <position position="150"/>
    </location>
</feature>